<evidence type="ECO:0000255" key="1">
    <source>
        <dbReference type="HAMAP-Rule" id="MF_01006"/>
    </source>
</evidence>
<evidence type="ECO:0000305" key="2"/>
<gene>
    <name evidence="1" type="primary">uppP</name>
    <name type="ordered locus">GDI1791</name>
    <name type="ordered locus">Gdia_0020</name>
</gene>
<keyword id="KW-0046">Antibiotic resistance</keyword>
<keyword id="KW-0997">Cell inner membrane</keyword>
<keyword id="KW-1003">Cell membrane</keyword>
<keyword id="KW-0133">Cell shape</keyword>
<keyword id="KW-0961">Cell wall biogenesis/degradation</keyword>
<keyword id="KW-0378">Hydrolase</keyword>
<keyword id="KW-0472">Membrane</keyword>
<keyword id="KW-0573">Peptidoglycan synthesis</keyword>
<keyword id="KW-1185">Reference proteome</keyword>
<keyword id="KW-0812">Transmembrane</keyword>
<keyword id="KW-1133">Transmembrane helix</keyword>
<sequence>MDSRTMTLIQAIVIAILQGATELFPVSSLGHAVIVPALLGWAFDPHGEIFLPFLVMLHLGTAIALLVYFRNDWAAIFQGLRGRDGSQRQAESIHILALLVVATIPAVIIGGLLEHWLRALFGTARYAAIFLFLNGLLLLLTERMKSRQPVQGGYAIASLTYADAAIIGLWQCLAFLPGISRSGATIIGALFRGLNHEGAARFSFLMAQPVIIAATVREALHMRHVAIPPGQMQVATIGAMVAAVTALASTAFLMRYFHNHERWALSPFGYYCVLAGAVSFFILGH</sequence>
<reference key="1">
    <citation type="journal article" date="2009" name="BMC Genomics">
        <title>Complete genome sequence of the sugarcane nitrogen-fixing endophyte Gluconacetobacter diazotrophicus Pal5.</title>
        <authorList>
            <person name="Bertalan M."/>
            <person name="Albano R."/>
            <person name="de Padua V."/>
            <person name="Rouws L."/>
            <person name="Rojas C."/>
            <person name="Hemerly A."/>
            <person name="Teixeira K."/>
            <person name="Schwab S."/>
            <person name="Araujo J."/>
            <person name="Oliveira A."/>
            <person name="Franca L."/>
            <person name="Magalhaes V."/>
            <person name="Alqueres S."/>
            <person name="Cardoso A."/>
            <person name="Almeida W."/>
            <person name="Loureiro M.M."/>
            <person name="Nogueira E."/>
            <person name="Cidade D."/>
            <person name="Oliveira D."/>
            <person name="Simao T."/>
            <person name="Macedo J."/>
            <person name="Valadao A."/>
            <person name="Dreschsel M."/>
            <person name="Freitas F."/>
            <person name="Vidal M."/>
            <person name="Guedes H."/>
            <person name="Rodrigues E."/>
            <person name="Meneses C."/>
            <person name="Brioso P."/>
            <person name="Pozzer L."/>
            <person name="Figueiredo D."/>
            <person name="Montano H."/>
            <person name="Junior J."/>
            <person name="de Souza Filho G."/>
            <person name="Martin Quintana Flores V."/>
            <person name="Ferreira B."/>
            <person name="Branco A."/>
            <person name="Gonzalez P."/>
            <person name="Guillobel H."/>
            <person name="Lemos M."/>
            <person name="Seibel L."/>
            <person name="Macedo J."/>
            <person name="Alves-Ferreira M."/>
            <person name="Sachetto-Martins G."/>
            <person name="Coelho A."/>
            <person name="Santos E."/>
            <person name="Amaral G."/>
            <person name="Neves A."/>
            <person name="Pacheco A.B."/>
            <person name="Carvalho D."/>
            <person name="Lery L."/>
            <person name="Bisch P."/>
            <person name="Rossle S.C."/>
            <person name="Urmenyi T."/>
            <person name="Rael Pereira A."/>
            <person name="Silva R."/>
            <person name="Rondinelli E."/>
            <person name="von Kruger W."/>
            <person name="Martins O."/>
            <person name="Baldani J.I."/>
            <person name="Ferreira P.C."/>
        </authorList>
    </citation>
    <scope>NUCLEOTIDE SEQUENCE [LARGE SCALE GENOMIC DNA]</scope>
    <source>
        <strain>ATCC 49037 / DSM 5601 / CCUG 37298 / CIP 103539 / LMG 7603 / PAl5</strain>
    </source>
</reference>
<reference key="2">
    <citation type="journal article" date="2010" name="Stand. Genomic Sci.">
        <title>Two genome sequences of the same bacterial strain, Gluconacetobacter diazotrophicus PAl 5, suggest a new standard in genome sequence submission.</title>
        <authorList>
            <person name="Giongo A."/>
            <person name="Tyler H.L."/>
            <person name="Zipperer U.N."/>
            <person name="Triplett E.W."/>
        </authorList>
    </citation>
    <scope>NUCLEOTIDE SEQUENCE [LARGE SCALE GENOMIC DNA]</scope>
    <source>
        <strain>ATCC 49037 / DSM 5601 / CCUG 37298 / CIP 103539 / LMG 7603 / PAl5</strain>
    </source>
</reference>
<feature type="chain" id="PRO_1000083979" description="Undecaprenyl-diphosphatase">
    <location>
        <begin position="1"/>
        <end position="285"/>
    </location>
</feature>
<feature type="transmembrane region" description="Helical" evidence="1">
    <location>
        <begin position="12"/>
        <end position="34"/>
    </location>
</feature>
<feature type="transmembrane region" description="Helical" evidence="1">
    <location>
        <begin position="49"/>
        <end position="69"/>
    </location>
</feature>
<feature type="transmembrane region" description="Helical" evidence="1">
    <location>
        <begin position="93"/>
        <end position="113"/>
    </location>
</feature>
<feature type="transmembrane region" description="Helical" evidence="1">
    <location>
        <begin position="120"/>
        <end position="140"/>
    </location>
</feature>
<feature type="transmembrane region" description="Helical" evidence="1">
    <location>
        <begin position="159"/>
        <end position="179"/>
    </location>
</feature>
<feature type="transmembrane region" description="Helical" evidence="1">
    <location>
        <begin position="234"/>
        <end position="254"/>
    </location>
</feature>
<feature type="transmembrane region" description="Helical" evidence="1">
    <location>
        <begin position="263"/>
        <end position="283"/>
    </location>
</feature>
<organism>
    <name type="scientific">Gluconacetobacter diazotrophicus (strain ATCC 49037 / DSM 5601 / CCUG 37298 / CIP 103539 / LMG 7603 / PAl5)</name>
    <dbReference type="NCBI Taxonomy" id="272568"/>
    <lineage>
        <taxon>Bacteria</taxon>
        <taxon>Pseudomonadati</taxon>
        <taxon>Pseudomonadota</taxon>
        <taxon>Alphaproteobacteria</taxon>
        <taxon>Acetobacterales</taxon>
        <taxon>Acetobacteraceae</taxon>
        <taxon>Gluconacetobacter</taxon>
    </lineage>
</organism>
<comment type="function">
    <text evidence="1">Catalyzes the dephosphorylation of undecaprenyl diphosphate (UPP). Confers resistance to bacitracin.</text>
</comment>
<comment type="catalytic activity">
    <reaction evidence="1">
        <text>di-trans,octa-cis-undecaprenyl diphosphate + H2O = di-trans,octa-cis-undecaprenyl phosphate + phosphate + H(+)</text>
        <dbReference type="Rhea" id="RHEA:28094"/>
        <dbReference type="ChEBI" id="CHEBI:15377"/>
        <dbReference type="ChEBI" id="CHEBI:15378"/>
        <dbReference type="ChEBI" id="CHEBI:43474"/>
        <dbReference type="ChEBI" id="CHEBI:58405"/>
        <dbReference type="ChEBI" id="CHEBI:60392"/>
        <dbReference type="EC" id="3.6.1.27"/>
    </reaction>
</comment>
<comment type="subcellular location">
    <subcellularLocation>
        <location evidence="1">Cell inner membrane</location>
        <topology evidence="1">Multi-pass membrane protein</topology>
    </subcellularLocation>
</comment>
<comment type="miscellaneous">
    <text>Bacitracin is thought to be involved in the inhibition of peptidoglycan synthesis by sequestering undecaprenyl diphosphate, thereby reducing the pool of lipid carrier available.</text>
</comment>
<comment type="similarity">
    <text evidence="1">Belongs to the UppP family.</text>
</comment>
<comment type="sequence caution" evidence="2">
    <conflict type="erroneous initiation">
        <sequence resource="EMBL-CDS" id="ACI49822"/>
    </conflict>
</comment>
<name>UPPP_GLUDA</name>
<proteinExistence type="inferred from homology"/>
<accession>A9HI81</accession>
<accession>B5ZJ44</accession>
<protein>
    <recommendedName>
        <fullName evidence="1">Undecaprenyl-diphosphatase</fullName>
        <ecNumber evidence="1">3.6.1.27</ecNumber>
    </recommendedName>
    <alternativeName>
        <fullName evidence="1">Bacitracin resistance protein</fullName>
    </alternativeName>
    <alternativeName>
        <fullName evidence="1">Undecaprenyl pyrophosphate phosphatase</fullName>
    </alternativeName>
</protein>
<dbReference type="EC" id="3.6.1.27" evidence="1"/>
<dbReference type="EMBL" id="AM889285">
    <property type="protein sequence ID" value="CAP55734.1"/>
    <property type="molecule type" value="Genomic_DNA"/>
</dbReference>
<dbReference type="EMBL" id="CP001189">
    <property type="protein sequence ID" value="ACI49822.1"/>
    <property type="status" value="ALT_INIT"/>
    <property type="molecule type" value="Genomic_DNA"/>
</dbReference>
<dbReference type="RefSeq" id="WP_012552928.1">
    <property type="nucleotide sequence ID" value="NC_011365.1"/>
</dbReference>
<dbReference type="SMR" id="A9HI81"/>
<dbReference type="STRING" id="272568.GDI1791"/>
<dbReference type="KEGG" id="gdi:GDI1791"/>
<dbReference type="KEGG" id="gdj:Gdia_0020"/>
<dbReference type="eggNOG" id="COG1968">
    <property type="taxonomic scope" value="Bacteria"/>
</dbReference>
<dbReference type="HOGENOM" id="CLU_060296_1_1_5"/>
<dbReference type="OrthoDB" id="9808289at2"/>
<dbReference type="Proteomes" id="UP000001176">
    <property type="component" value="Chromosome"/>
</dbReference>
<dbReference type="GO" id="GO:0005886">
    <property type="term" value="C:plasma membrane"/>
    <property type="evidence" value="ECO:0007669"/>
    <property type="project" value="UniProtKB-SubCell"/>
</dbReference>
<dbReference type="GO" id="GO:0050380">
    <property type="term" value="F:undecaprenyl-diphosphatase activity"/>
    <property type="evidence" value="ECO:0007669"/>
    <property type="project" value="UniProtKB-UniRule"/>
</dbReference>
<dbReference type="GO" id="GO:0071555">
    <property type="term" value="P:cell wall organization"/>
    <property type="evidence" value="ECO:0007669"/>
    <property type="project" value="UniProtKB-KW"/>
</dbReference>
<dbReference type="GO" id="GO:0009252">
    <property type="term" value="P:peptidoglycan biosynthetic process"/>
    <property type="evidence" value="ECO:0007669"/>
    <property type="project" value="UniProtKB-KW"/>
</dbReference>
<dbReference type="GO" id="GO:0008360">
    <property type="term" value="P:regulation of cell shape"/>
    <property type="evidence" value="ECO:0007669"/>
    <property type="project" value="UniProtKB-KW"/>
</dbReference>
<dbReference type="GO" id="GO:0046677">
    <property type="term" value="P:response to antibiotic"/>
    <property type="evidence" value="ECO:0007669"/>
    <property type="project" value="UniProtKB-UniRule"/>
</dbReference>
<dbReference type="HAMAP" id="MF_01006">
    <property type="entry name" value="Undec_diphosphatase"/>
    <property type="match status" value="1"/>
</dbReference>
<dbReference type="InterPro" id="IPR003824">
    <property type="entry name" value="UppP"/>
</dbReference>
<dbReference type="NCBIfam" id="NF001397">
    <property type="entry name" value="PRK00281.3-4"/>
    <property type="match status" value="1"/>
</dbReference>
<dbReference type="PANTHER" id="PTHR30622">
    <property type="entry name" value="UNDECAPRENYL-DIPHOSPHATASE"/>
    <property type="match status" value="1"/>
</dbReference>
<dbReference type="PANTHER" id="PTHR30622:SF4">
    <property type="entry name" value="UNDECAPRENYL-DIPHOSPHATASE"/>
    <property type="match status" value="1"/>
</dbReference>
<dbReference type="Pfam" id="PF02673">
    <property type="entry name" value="BacA"/>
    <property type="match status" value="1"/>
</dbReference>